<name>ASP23_STAAR</name>
<comment type="function">
    <text evidence="1">May play a key role in alkaline pH tolerance.</text>
</comment>
<comment type="similarity">
    <text evidence="3">Belongs to the asp23 family.</text>
</comment>
<accession>Q6GEP7</accession>
<proteinExistence type="inferred from homology"/>
<sequence>MTVDNNKAKQAYDNQTGVNEKEREERQKQQEQNQEPQFKNKLTFSDEVVEKIAGIAAREVKGILDMKGGLTDTFTNAFSSGNNVTQGVSVEVGEKQAAVDLKVILEYGESAPKIFRKVTELVKEQVKYITGLDVVEVNMQVDDVMTQKEWKQKHEKNNENNNQERQGLQ</sequence>
<protein>
    <recommendedName>
        <fullName>Alkaline shock protein 23</fullName>
    </recommendedName>
</protein>
<gene>
    <name type="primary">asp23</name>
    <name type="ordered locus">SAR2273</name>
</gene>
<dbReference type="EMBL" id="BX571856">
    <property type="protein sequence ID" value="CAG41251.1"/>
    <property type="molecule type" value="Genomic_DNA"/>
</dbReference>
<dbReference type="RefSeq" id="WP_000215236.1">
    <property type="nucleotide sequence ID" value="NC_002952.2"/>
</dbReference>
<dbReference type="SMR" id="Q6GEP7"/>
<dbReference type="KEGG" id="sar:SAR2273"/>
<dbReference type="HOGENOM" id="CLU_113198_1_1_9"/>
<dbReference type="Proteomes" id="UP000000596">
    <property type="component" value="Chromosome"/>
</dbReference>
<dbReference type="InterPro" id="IPR005531">
    <property type="entry name" value="Asp23"/>
</dbReference>
<dbReference type="PANTHER" id="PTHR34297:SF3">
    <property type="entry name" value="ALKALINE SHOCK PROTEIN 23"/>
    <property type="match status" value="1"/>
</dbReference>
<dbReference type="PANTHER" id="PTHR34297">
    <property type="entry name" value="HYPOTHETICAL CYTOSOLIC PROTEIN-RELATED"/>
    <property type="match status" value="1"/>
</dbReference>
<dbReference type="Pfam" id="PF03780">
    <property type="entry name" value="Asp23"/>
    <property type="match status" value="1"/>
</dbReference>
<reference key="1">
    <citation type="journal article" date="2004" name="Proc. Natl. Acad. Sci. U.S.A.">
        <title>Complete genomes of two clinical Staphylococcus aureus strains: evidence for the rapid evolution of virulence and drug resistance.</title>
        <authorList>
            <person name="Holden M.T.G."/>
            <person name="Feil E.J."/>
            <person name="Lindsay J.A."/>
            <person name="Peacock S.J."/>
            <person name="Day N.P.J."/>
            <person name="Enright M.C."/>
            <person name="Foster T.J."/>
            <person name="Moore C.E."/>
            <person name="Hurst L."/>
            <person name="Atkin R."/>
            <person name="Barron A."/>
            <person name="Bason N."/>
            <person name="Bentley S.D."/>
            <person name="Chillingworth C."/>
            <person name="Chillingworth T."/>
            <person name="Churcher C."/>
            <person name="Clark L."/>
            <person name="Corton C."/>
            <person name="Cronin A."/>
            <person name="Doggett J."/>
            <person name="Dowd L."/>
            <person name="Feltwell T."/>
            <person name="Hance Z."/>
            <person name="Harris B."/>
            <person name="Hauser H."/>
            <person name="Holroyd S."/>
            <person name="Jagels K."/>
            <person name="James K.D."/>
            <person name="Lennard N."/>
            <person name="Line A."/>
            <person name="Mayes R."/>
            <person name="Moule S."/>
            <person name="Mungall K."/>
            <person name="Ormond D."/>
            <person name="Quail M.A."/>
            <person name="Rabbinowitsch E."/>
            <person name="Rutherford K.M."/>
            <person name="Sanders M."/>
            <person name="Sharp S."/>
            <person name="Simmonds M."/>
            <person name="Stevens K."/>
            <person name="Whitehead S."/>
            <person name="Barrell B.G."/>
            <person name="Spratt B.G."/>
            <person name="Parkhill J."/>
        </authorList>
    </citation>
    <scope>NUCLEOTIDE SEQUENCE [LARGE SCALE GENOMIC DNA]</scope>
    <source>
        <strain>MRSA252</strain>
    </source>
</reference>
<organism>
    <name type="scientific">Staphylococcus aureus (strain MRSA252)</name>
    <dbReference type="NCBI Taxonomy" id="282458"/>
    <lineage>
        <taxon>Bacteria</taxon>
        <taxon>Bacillati</taxon>
        <taxon>Bacillota</taxon>
        <taxon>Bacilli</taxon>
        <taxon>Bacillales</taxon>
        <taxon>Staphylococcaceae</taxon>
        <taxon>Staphylococcus</taxon>
    </lineage>
</organism>
<evidence type="ECO:0000250" key="1"/>
<evidence type="ECO:0000256" key="2">
    <source>
        <dbReference type="SAM" id="MobiDB-lite"/>
    </source>
</evidence>
<evidence type="ECO:0000305" key="3"/>
<feature type="chain" id="PRO_0000170479" description="Alkaline shock protein 23">
    <location>
        <begin position="1"/>
        <end position="169"/>
    </location>
</feature>
<feature type="region of interest" description="Disordered" evidence="2">
    <location>
        <begin position="1"/>
        <end position="40"/>
    </location>
</feature>
<feature type="region of interest" description="Disordered" evidence="2">
    <location>
        <begin position="148"/>
        <end position="169"/>
    </location>
</feature>
<feature type="compositionally biased region" description="Basic and acidic residues" evidence="2">
    <location>
        <begin position="19"/>
        <end position="29"/>
    </location>
</feature>
<feature type="compositionally biased region" description="Basic and acidic residues" evidence="2">
    <location>
        <begin position="148"/>
        <end position="158"/>
    </location>
</feature>
<feature type="compositionally biased region" description="Low complexity" evidence="2">
    <location>
        <begin position="159"/>
        <end position="169"/>
    </location>
</feature>